<comment type="function">
    <text evidence="7 8">Required during abscisic acid (ABA)-mediated activation of Ca(2+) channels. Regulates ABA signaling pathways. Modulates the expression of genes related to cell elongation and ABA signaling during root growth.</text>
</comment>
<comment type="catalytic activity">
    <reaction evidence="7">
        <text>L-seryl-[protein] + ATP = O-phospho-L-seryl-[protein] + ADP + H(+)</text>
        <dbReference type="Rhea" id="RHEA:17989"/>
        <dbReference type="Rhea" id="RHEA-COMP:9863"/>
        <dbReference type="Rhea" id="RHEA-COMP:11604"/>
        <dbReference type="ChEBI" id="CHEBI:15378"/>
        <dbReference type="ChEBI" id="CHEBI:29999"/>
        <dbReference type="ChEBI" id="CHEBI:30616"/>
        <dbReference type="ChEBI" id="CHEBI:83421"/>
        <dbReference type="ChEBI" id="CHEBI:456216"/>
        <dbReference type="EC" id="2.7.11.1"/>
    </reaction>
</comment>
<comment type="catalytic activity">
    <reaction evidence="7">
        <text>L-threonyl-[protein] + ATP = O-phospho-L-threonyl-[protein] + ADP + H(+)</text>
        <dbReference type="Rhea" id="RHEA:46608"/>
        <dbReference type="Rhea" id="RHEA-COMP:11060"/>
        <dbReference type="Rhea" id="RHEA-COMP:11605"/>
        <dbReference type="ChEBI" id="CHEBI:15378"/>
        <dbReference type="ChEBI" id="CHEBI:30013"/>
        <dbReference type="ChEBI" id="CHEBI:30616"/>
        <dbReference type="ChEBI" id="CHEBI:61977"/>
        <dbReference type="ChEBI" id="CHEBI:456216"/>
        <dbReference type="EC" id="2.7.11.1"/>
    </reaction>
</comment>
<comment type="activity regulation">
    <text evidence="7">Activated by ABA and Ca(2+).</text>
</comment>
<comment type="subcellular location">
    <subcellularLocation>
        <location evidence="7">Cell membrane</location>
        <topology evidence="7">Single-pass membrane protein</topology>
    </subcellularLocation>
</comment>
<comment type="tissue specificity">
    <text evidence="6 7">Mostly expressed in inflorescence bolts. Also present in roots, stems, germinated seeds, cotyledons, pollen, stamen and stigma.</text>
</comment>
<comment type="induction">
    <text evidence="7">By ABA.</text>
</comment>
<comment type="disruption phenotype">
    <text evidence="7">Decreased sensitivity to ABA with respect to seed germination, seedling growth and primary root tip elongation. Impaired cytoplasmic Ca(2+) accumulation in response to ABA.</text>
</comment>
<comment type="similarity">
    <text evidence="3">Belongs to the protein kinase superfamily. Ser/Thr protein kinase family.</text>
</comment>
<organism>
    <name type="scientific">Arabidopsis thaliana</name>
    <name type="common">Mouse-ear cress</name>
    <dbReference type="NCBI Taxonomy" id="3702"/>
    <lineage>
        <taxon>Eukaryota</taxon>
        <taxon>Viridiplantae</taxon>
        <taxon>Streptophyta</taxon>
        <taxon>Embryophyta</taxon>
        <taxon>Tracheophyta</taxon>
        <taxon>Spermatophyta</taxon>
        <taxon>Magnoliopsida</taxon>
        <taxon>eudicotyledons</taxon>
        <taxon>Gunneridae</taxon>
        <taxon>Pentapetalae</taxon>
        <taxon>rosids</taxon>
        <taxon>malvids</taxon>
        <taxon>Brassicales</taxon>
        <taxon>Brassicaceae</taxon>
        <taxon>Camelineae</taxon>
        <taxon>Arabidopsis</taxon>
    </lineage>
</organism>
<dbReference type="EC" id="2.7.11.1"/>
<dbReference type="EMBL" id="AC006135">
    <property type="protein sequence ID" value="AAD12219.1"/>
    <property type="molecule type" value="Genomic_DNA"/>
</dbReference>
<dbReference type="EMBL" id="AC006439">
    <property type="protein sequence ID" value="AAM15257.1"/>
    <property type="molecule type" value="Genomic_DNA"/>
</dbReference>
<dbReference type="EMBL" id="CP002685">
    <property type="protein sequence ID" value="AEC06772.1"/>
    <property type="molecule type" value="Genomic_DNA"/>
</dbReference>
<dbReference type="EMBL" id="CP002685">
    <property type="protein sequence ID" value="ANM62350.1"/>
    <property type="molecule type" value="Genomic_DNA"/>
</dbReference>
<dbReference type="EMBL" id="CP002685">
    <property type="protein sequence ID" value="ANM62351.1"/>
    <property type="molecule type" value="Genomic_DNA"/>
</dbReference>
<dbReference type="PIR" id="F84564">
    <property type="entry name" value="F84564"/>
</dbReference>
<dbReference type="RefSeq" id="NP_001324511.1">
    <property type="nucleotide sequence ID" value="NM_001335596.1"/>
</dbReference>
<dbReference type="RefSeq" id="NP_001324512.1">
    <property type="nucleotide sequence ID" value="NM_001335595.1"/>
</dbReference>
<dbReference type="RefSeq" id="NP_179437.1">
    <property type="nucleotide sequence ID" value="NM_127403.3"/>
</dbReference>
<dbReference type="SMR" id="Q9ZNQ8"/>
<dbReference type="BioGRID" id="1719">
    <property type="interactions" value="2"/>
</dbReference>
<dbReference type="FunCoup" id="Q9ZNQ8">
    <property type="interactions" value="48"/>
</dbReference>
<dbReference type="IntAct" id="Q9ZNQ8">
    <property type="interactions" value="2"/>
</dbReference>
<dbReference type="STRING" id="3702.Q9ZNQ8"/>
<dbReference type="GlyCosmos" id="Q9ZNQ8">
    <property type="glycosylation" value="3 sites, No reported glycans"/>
</dbReference>
<dbReference type="GlyGen" id="Q9ZNQ8">
    <property type="glycosylation" value="5 sites"/>
</dbReference>
<dbReference type="iPTMnet" id="Q9ZNQ8"/>
<dbReference type="PaxDb" id="3702-AT2G18470.1"/>
<dbReference type="ProteomicsDB" id="236687"/>
<dbReference type="EnsemblPlants" id="AT2G18470.1">
    <property type="protein sequence ID" value="AT2G18470.1"/>
    <property type="gene ID" value="AT2G18470"/>
</dbReference>
<dbReference type="EnsemblPlants" id="AT2G18470.2">
    <property type="protein sequence ID" value="AT2G18470.2"/>
    <property type="gene ID" value="AT2G18470"/>
</dbReference>
<dbReference type="EnsemblPlants" id="AT2G18470.3">
    <property type="protein sequence ID" value="AT2G18470.3"/>
    <property type="gene ID" value="AT2G18470"/>
</dbReference>
<dbReference type="GeneID" id="816362"/>
<dbReference type="Gramene" id="AT2G18470.1">
    <property type="protein sequence ID" value="AT2G18470.1"/>
    <property type="gene ID" value="AT2G18470"/>
</dbReference>
<dbReference type="Gramene" id="AT2G18470.2">
    <property type="protein sequence ID" value="AT2G18470.2"/>
    <property type="gene ID" value="AT2G18470"/>
</dbReference>
<dbReference type="Gramene" id="AT2G18470.3">
    <property type="protein sequence ID" value="AT2G18470.3"/>
    <property type="gene ID" value="AT2G18470"/>
</dbReference>
<dbReference type="KEGG" id="ath:AT2G18470"/>
<dbReference type="Araport" id="AT2G18470"/>
<dbReference type="TAIR" id="AT2G18470">
    <property type="gene designation" value="PERK4"/>
</dbReference>
<dbReference type="eggNOG" id="KOG1187">
    <property type="taxonomic scope" value="Eukaryota"/>
</dbReference>
<dbReference type="HOGENOM" id="CLU_000288_106_6_1"/>
<dbReference type="InParanoid" id="Q9ZNQ8"/>
<dbReference type="OMA" id="NDHCDEP"/>
<dbReference type="PhylomeDB" id="Q9ZNQ8"/>
<dbReference type="PRO" id="PR:Q9ZNQ8"/>
<dbReference type="Proteomes" id="UP000006548">
    <property type="component" value="Chromosome 2"/>
</dbReference>
<dbReference type="ExpressionAtlas" id="Q9ZNQ8">
    <property type="expression patterns" value="baseline and differential"/>
</dbReference>
<dbReference type="GO" id="GO:0005886">
    <property type="term" value="C:plasma membrane"/>
    <property type="evidence" value="ECO:0000314"/>
    <property type="project" value="TAIR"/>
</dbReference>
<dbReference type="GO" id="GO:0005524">
    <property type="term" value="F:ATP binding"/>
    <property type="evidence" value="ECO:0007669"/>
    <property type="project" value="UniProtKB-KW"/>
</dbReference>
<dbReference type="GO" id="GO:0004672">
    <property type="term" value="F:protein kinase activity"/>
    <property type="evidence" value="ECO:0000314"/>
    <property type="project" value="TAIR"/>
</dbReference>
<dbReference type="GO" id="GO:0106310">
    <property type="term" value="F:protein serine kinase activity"/>
    <property type="evidence" value="ECO:0007669"/>
    <property type="project" value="RHEA"/>
</dbReference>
<dbReference type="GO" id="GO:0004674">
    <property type="term" value="F:protein serine/threonine kinase activity"/>
    <property type="evidence" value="ECO:0007669"/>
    <property type="project" value="UniProtKB-KW"/>
</dbReference>
<dbReference type="GO" id="GO:0009738">
    <property type="term" value="P:abscisic acid-activated signaling pathway"/>
    <property type="evidence" value="ECO:0000315"/>
    <property type="project" value="TAIR"/>
</dbReference>
<dbReference type="GO" id="GO:0019722">
    <property type="term" value="P:calcium-mediated signaling"/>
    <property type="evidence" value="ECO:0000315"/>
    <property type="project" value="TAIR"/>
</dbReference>
<dbReference type="GO" id="GO:0048364">
    <property type="term" value="P:root development"/>
    <property type="evidence" value="ECO:0000315"/>
    <property type="project" value="TAIR"/>
</dbReference>
<dbReference type="GO" id="GO:0009845">
    <property type="term" value="P:seed germination"/>
    <property type="evidence" value="ECO:0000315"/>
    <property type="project" value="TAIR"/>
</dbReference>
<dbReference type="FunFam" id="1.10.510.10:FF:000239">
    <property type="entry name" value="Proline-rich receptor-like protein kinase PERK1"/>
    <property type="match status" value="1"/>
</dbReference>
<dbReference type="FunFam" id="3.30.200.20:FF:000207">
    <property type="entry name" value="proline-rich receptor-like protein kinase PERK1"/>
    <property type="match status" value="1"/>
</dbReference>
<dbReference type="Gene3D" id="3.30.200.20">
    <property type="entry name" value="Phosphorylase Kinase, domain 1"/>
    <property type="match status" value="1"/>
</dbReference>
<dbReference type="Gene3D" id="1.10.510.10">
    <property type="entry name" value="Transferase(Phosphotransferase) domain 1"/>
    <property type="match status" value="1"/>
</dbReference>
<dbReference type="InterPro" id="IPR011009">
    <property type="entry name" value="Kinase-like_dom_sf"/>
</dbReference>
<dbReference type="InterPro" id="IPR047117">
    <property type="entry name" value="PERK1-13-like"/>
</dbReference>
<dbReference type="InterPro" id="IPR000719">
    <property type="entry name" value="Prot_kinase_dom"/>
</dbReference>
<dbReference type="InterPro" id="IPR017441">
    <property type="entry name" value="Protein_kinase_ATP_BS"/>
</dbReference>
<dbReference type="InterPro" id="IPR008271">
    <property type="entry name" value="Ser/Thr_kinase_AS"/>
</dbReference>
<dbReference type="PANTHER" id="PTHR47982">
    <property type="entry name" value="PROLINE-RICH RECEPTOR-LIKE PROTEIN KINASE PERK4"/>
    <property type="match status" value="1"/>
</dbReference>
<dbReference type="PANTHER" id="PTHR47982:SF6">
    <property type="entry name" value="PROLINE-RICH RECEPTOR-LIKE PROTEIN KINASE PERK4"/>
    <property type="match status" value="1"/>
</dbReference>
<dbReference type="Pfam" id="PF00069">
    <property type="entry name" value="Pkinase"/>
    <property type="match status" value="1"/>
</dbReference>
<dbReference type="SMART" id="SM00220">
    <property type="entry name" value="S_TKc"/>
    <property type="match status" value="1"/>
</dbReference>
<dbReference type="SUPFAM" id="SSF56112">
    <property type="entry name" value="Protein kinase-like (PK-like)"/>
    <property type="match status" value="1"/>
</dbReference>
<dbReference type="PROSITE" id="PS00107">
    <property type="entry name" value="PROTEIN_KINASE_ATP"/>
    <property type="match status" value="1"/>
</dbReference>
<dbReference type="PROSITE" id="PS50011">
    <property type="entry name" value="PROTEIN_KINASE_DOM"/>
    <property type="match status" value="1"/>
</dbReference>
<dbReference type="PROSITE" id="PS00108">
    <property type="entry name" value="PROTEIN_KINASE_ST"/>
    <property type="match status" value="1"/>
</dbReference>
<sequence length="633" mass="66652">MASSPESAPPTNSTSSPSPPSNTNSTTSSPPAPSPPSPTPPQGDSSSSPPPDSTSPPAPQAPNPPNSSNNSPSPPSQGGGGERGNGGNNGGNDTPPSRGSPPSPPSRSNGDNGGSRSSPPGDTGGSRSDNPPSSGGSSGGGGGGRSNTNTAIIVGVLVGAGLLMIVLIIVCLRRKKKRKDSFYPEPMKGNQYQYYGNNNNNNASQNYPNWHLNSQGQNQQSTGGWGGGGPSPPPPPRMPTSGEDSSMYSGPSRPVLPPPSPALALGFNKSTFTYQELAAATGGFTDANLLGQGGFGYVHKGVLPSGKEVAVKSLKAGSGQGEREFQAEVDIISRVHHRYLVSLVGYCIADGQRMLVYEFVPNKTLEYHLHGKNLPVMEFSTRLRIALGAAKGLAYLHEDCHPRIIHRDIKSANILLDFNFDAMVADFGLAKLTSDNNTHVSTRVMGTFGYLAPEYASSGKLTEKSDVFSYGVMLLELITGKRPVDNSITMDDTLVDWARPLMARALEDGNFNELADARLEGNYNPQEMARMVTCAAASIRHSGRKRPKMSQIVRALEGEVSLDALNEGVKPGHSNVYGSLGASSDYSQTSYNADMKKFRQIALSSQEFPVSDCEGTSSNDSRDMGTKSPTPPK</sequence>
<proteinExistence type="evidence at protein level"/>
<accession>Q9ZNQ8</accession>
<gene>
    <name type="primary">PERK4</name>
    <name type="ordered locus">At2g18470</name>
    <name type="ORF">T30D6.2</name>
</gene>
<evidence type="ECO:0000250" key="1">
    <source>
        <dbReference type="UniProtKB" id="O48814"/>
    </source>
</evidence>
<evidence type="ECO:0000255" key="2"/>
<evidence type="ECO:0000255" key="3">
    <source>
        <dbReference type="PROSITE-ProRule" id="PRU00159"/>
    </source>
</evidence>
<evidence type="ECO:0000255" key="4">
    <source>
        <dbReference type="PROSITE-ProRule" id="PRU10027"/>
    </source>
</evidence>
<evidence type="ECO:0000256" key="5">
    <source>
        <dbReference type="SAM" id="MobiDB-lite"/>
    </source>
</evidence>
<evidence type="ECO:0000269" key="6">
    <source>
    </source>
</evidence>
<evidence type="ECO:0000269" key="7">
    <source>
    </source>
</evidence>
<evidence type="ECO:0000269" key="8">
    <source>
    </source>
</evidence>
<name>PERK4_ARATH</name>
<protein>
    <recommendedName>
        <fullName>Proline-rich receptor-like protein kinase PERK4</fullName>
        <ecNumber>2.7.11.1</ecNumber>
    </recommendedName>
    <alternativeName>
        <fullName>Proline-rich extensin-like receptor kinase 4</fullName>
        <shortName>AtPERK4</shortName>
    </alternativeName>
</protein>
<keyword id="KW-0938">Abscisic acid signaling pathway</keyword>
<keyword id="KW-0067">ATP-binding</keyword>
<keyword id="KW-1003">Cell membrane</keyword>
<keyword id="KW-0325">Glycoprotein</keyword>
<keyword id="KW-0418">Kinase</keyword>
<keyword id="KW-0472">Membrane</keyword>
<keyword id="KW-0547">Nucleotide-binding</keyword>
<keyword id="KW-0597">Phosphoprotein</keyword>
<keyword id="KW-1185">Reference proteome</keyword>
<keyword id="KW-0723">Serine/threonine-protein kinase</keyword>
<keyword id="KW-0808">Transferase</keyword>
<keyword id="KW-0812">Transmembrane</keyword>
<keyword id="KW-1133">Transmembrane helix</keyword>
<feature type="chain" id="PRO_0000400056" description="Proline-rich receptor-like protein kinase PERK4">
    <location>
        <begin position="1"/>
        <end position="633"/>
    </location>
</feature>
<feature type="topological domain" description="Extracellular" evidence="2">
    <location>
        <begin position="1"/>
        <end position="151"/>
    </location>
</feature>
<feature type="transmembrane region" description="Helical" evidence="2">
    <location>
        <begin position="152"/>
        <end position="172"/>
    </location>
</feature>
<feature type="topological domain" description="Cytoplasmic" evidence="2">
    <location>
        <begin position="173"/>
        <end position="633"/>
    </location>
</feature>
<feature type="domain" description="Protein kinase" evidence="3">
    <location>
        <begin position="284"/>
        <end position="562"/>
    </location>
</feature>
<feature type="region of interest" description="Disordered" evidence="5">
    <location>
        <begin position="1"/>
        <end position="145"/>
    </location>
</feature>
<feature type="region of interest" description="Disordered" evidence="5">
    <location>
        <begin position="193"/>
        <end position="255"/>
    </location>
</feature>
<feature type="region of interest" description="Disordered" evidence="5">
    <location>
        <begin position="608"/>
        <end position="633"/>
    </location>
</feature>
<feature type="compositionally biased region" description="Low complexity" evidence="5">
    <location>
        <begin position="1"/>
        <end position="29"/>
    </location>
</feature>
<feature type="compositionally biased region" description="Pro residues" evidence="5">
    <location>
        <begin position="30"/>
        <end position="41"/>
    </location>
</feature>
<feature type="compositionally biased region" description="Pro residues" evidence="5">
    <location>
        <begin position="48"/>
        <end position="65"/>
    </location>
</feature>
<feature type="compositionally biased region" description="Gly residues" evidence="5">
    <location>
        <begin position="77"/>
        <end position="90"/>
    </location>
</feature>
<feature type="compositionally biased region" description="Low complexity" evidence="5">
    <location>
        <begin position="106"/>
        <end position="135"/>
    </location>
</feature>
<feature type="compositionally biased region" description="Gly residues" evidence="5">
    <location>
        <begin position="136"/>
        <end position="145"/>
    </location>
</feature>
<feature type="compositionally biased region" description="Low complexity" evidence="5">
    <location>
        <begin position="193"/>
        <end position="222"/>
    </location>
</feature>
<feature type="compositionally biased region" description="Polar residues" evidence="5">
    <location>
        <begin position="608"/>
        <end position="619"/>
    </location>
</feature>
<feature type="active site" description="Proton acceptor" evidence="3 4">
    <location>
        <position position="408"/>
    </location>
</feature>
<feature type="binding site" evidence="3">
    <location>
        <begin position="290"/>
        <end position="298"/>
    </location>
    <ligand>
        <name>ATP</name>
        <dbReference type="ChEBI" id="CHEBI:30616"/>
    </ligand>
</feature>
<feature type="binding site" evidence="3">
    <location>
        <position position="312"/>
    </location>
    <ligand>
        <name>ATP</name>
        <dbReference type="ChEBI" id="CHEBI:30616"/>
    </ligand>
</feature>
<feature type="modified residue" description="Phosphothreonine" evidence="1">
    <location>
        <position position="273"/>
    </location>
</feature>
<feature type="modified residue" description="Phosphotyrosine" evidence="1">
    <location>
        <position position="357"/>
    </location>
</feature>
<feature type="modified residue" description="Phosphoserine" evidence="1">
    <location>
        <position position="441"/>
    </location>
</feature>
<feature type="modified residue" description="Phosphothreonine" evidence="1">
    <location>
        <position position="442"/>
    </location>
</feature>
<feature type="modified residue" description="Phosphothreonine" evidence="1">
    <location>
        <position position="447"/>
    </location>
</feature>
<feature type="modified residue" description="Phosphotyrosine" evidence="1">
    <location>
        <position position="455"/>
    </location>
</feature>
<feature type="glycosylation site" description="N-linked (GlcNAc...) asparagine" evidence="2">
    <location>
        <position position="12"/>
    </location>
</feature>
<feature type="glycosylation site" description="N-linked (GlcNAc...) asparagine" evidence="2">
    <location>
        <position position="24"/>
    </location>
</feature>
<feature type="glycosylation site" description="N-linked (GlcNAc...) asparagine" evidence="2">
    <location>
        <position position="66"/>
    </location>
</feature>
<reference key="1">
    <citation type="journal article" date="1999" name="Nature">
        <title>Sequence and analysis of chromosome 2 of the plant Arabidopsis thaliana.</title>
        <authorList>
            <person name="Lin X."/>
            <person name="Kaul S."/>
            <person name="Rounsley S.D."/>
            <person name="Shea T.P."/>
            <person name="Benito M.-I."/>
            <person name="Town C.D."/>
            <person name="Fujii C.Y."/>
            <person name="Mason T.M."/>
            <person name="Bowman C.L."/>
            <person name="Barnstead M.E."/>
            <person name="Feldblyum T.V."/>
            <person name="Buell C.R."/>
            <person name="Ketchum K.A."/>
            <person name="Lee J.J."/>
            <person name="Ronning C.M."/>
            <person name="Koo H.L."/>
            <person name="Moffat K.S."/>
            <person name="Cronin L.A."/>
            <person name="Shen M."/>
            <person name="Pai G."/>
            <person name="Van Aken S."/>
            <person name="Umayam L."/>
            <person name="Tallon L.J."/>
            <person name="Gill J.E."/>
            <person name="Adams M.D."/>
            <person name="Carrera A.J."/>
            <person name="Creasy T.H."/>
            <person name="Goodman H.M."/>
            <person name="Somerville C.R."/>
            <person name="Copenhaver G.P."/>
            <person name="Preuss D."/>
            <person name="Nierman W.C."/>
            <person name="White O."/>
            <person name="Eisen J.A."/>
            <person name="Salzberg S.L."/>
            <person name="Fraser C.M."/>
            <person name="Venter J.C."/>
        </authorList>
    </citation>
    <scope>NUCLEOTIDE SEQUENCE [LARGE SCALE GENOMIC DNA]</scope>
    <source>
        <strain>cv. Columbia</strain>
    </source>
</reference>
<reference key="2">
    <citation type="journal article" date="2017" name="Plant J.">
        <title>Araport11: a complete reannotation of the Arabidopsis thaliana reference genome.</title>
        <authorList>
            <person name="Cheng C.Y."/>
            <person name="Krishnakumar V."/>
            <person name="Chan A.P."/>
            <person name="Thibaud-Nissen F."/>
            <person name="Schobel S."/>
            <person name="Town C.D."/>
        </authorList>
    </citation>
    <scope>GENOME REANNOTATION</scope>
    <source>
        <strain>cv. Columbia</strain>
    </source>
</reference>
<reference key="3">
    <citation type="journal article" date="2002" name="Plant Mol. Biol.">
        <title>The proline-rich, extensin-like receptor kinase-1 (PERK1) gene is rapidly induced by wounding.</title>
        <authorList>
            <person name="Silva N.F."/>
            <person name="Goring D.R."/>
        </authorList>
    </citation>
    <scope>GENE FAMILY</scope>
</reference>
<reference key="4">
    <citation type="journal article" date="2004" name="Plant Cell Physiol.">
        <title>A comprehensive expression analysis of the Arabidopsis proline-rich extensin-like receptor kinase gene family using bioinformatic and experimental approaches.</title>
        <authorList>
            <person name="Nakhamchik A."/>
            <person name="Zhao Z."/>
            <person name="Provart N.J."/>
            <person name="Shiu S.-H."/>
            <person name="Keatley S.K."/>
            <person name="Cameron R.K."/>
            <person name="Goring D.R."/>
        </authorList>
    </citation>
    <scope>TISSUE SPECIFICITY</scope>
    <scope>GENE FAMILY</scope>
    <scope>NOMENCLATURE</scope>
</reference>
<reference key="5">
    <citation type="journal article" date="2009" name="Plant J.">
        <title>Plasma membrane-associated proline-rich extensin-like receptor kinase 4, a novel regulator of Ca signalling, is required for abscisic acid responses in Arabidopsis thaliana.</title>
        <authorList>
            <person name="Bai L."/>
            <person name="Zhang G."/>
            <person name="Zhou Y."/>
            <person name="Zhang Z."/>
            <person name="Wang W."/>
            <person name="Du Y."/>
            <person name="Wu Z."/>
            <person name="Song C.-P."/>
        </authorList>
    </citation>
    <scope>FUNCTION</scope>
    <scope>DISRUPTION PHENOTYPE</scope>
    <scope>SUBCELLULAR LOCATION</scope>
    <scope>INDUCTION BY ABSCISIC ACID</scope>
    <scope>TISSUE SPECIFICITY</scope>
    <scope>CATALYTIC ACTIVITY</scope>
    <scope>ACTIVITY REGULATION</scope>
</reference>
<reference key="6">
    <citation type="journal article" date="2009" name="Plant Signal. Behav.">
        <title>Arabidopsis proline-rich extensin-like receptor kinase 4 modulates the early event toward abscisic acid response in root tip growth.</title>
        <authorList>
            <person name="Bai L."/>
            <person name="Zhou Y."/>
            <person name="Song C.P."/>
        </authorList>
    </citation>
    <scope>FUNCTION</scope>
</reference>